<reference key="1">
    <citation type="journal article" date="1995" name="Biochim. Biophys. Acta">
        <title>Differential expression of a lipid transfer protein gene in cotton fiber.</title>
        <authorList>
            <person name="Ma D.-P."/>
            <person name="Tan H."/>
            <person name="Si Y."/>
            <person name="Creech R.G."/>
            <person name="Jenkins J.N."/>
        </authorList>
    </citation>
    <scope>NUCLEOTIDE SEQUENCE [MRNA]</scope>
    <source>
        <tissue>Fiber</tissue>
    </source>
</reference>
<proteinExistence type="evidence at transcript level"/>
<evidence type="ECO:0000250" key="1"/>
<evidence type="ECO:0000255" key="2"/>
<evidence type="ECO:0000305" key="3"/>
<dbReference type="EMBL" id="S78173">
    <property type="protein sequence ID" value="AAB34774.1"/>
    <property type="molecule type" value="mRNA"/>
</dbReference>
<dbReference type="PIR" id="T10812">
    <property type="entry name" value="T10812"/>
</dbReference>
<dbReference type="SMR" id="Q43129"/>
<dbReference type="STRING" id="3635.Q43129"/>
<dbReference type="PaxDb" id="3635-Q43129"/>
<dbReference type="Proteomes" id="UP000189702">
    <property type="component" value="Unplaced"/>
</dbReference>
<dbReference type="GO" id="GO:0008289">
    <property type="term" value="F:lipid binding"/>
    <property type="evidence" value="ECO:0007669"/>
    <property type="project" value="UniProtKB-KW"/>
</dbReference>
<dbReference type="GO" id="GO:0006869">
    <property type="term" value="P:lipid transport"/>
    <property type="evidence" value="ECO:0000304"/>
    <property type="project" value="AgBase"/>
</dbReference>
<dbReference type="GO" id="GO:0090378">
    <property type="term" value="P:seed trichome elongation"/>
    <property type="evidence" value="ECO:0000270"/>
    <property type="project" value="AgBase"/>
</dbReference>
<dbReference type="CDD" id="cd01960">
    <property type="entry name" value="nsLTP1"/>
    <property type="match status" value="1"/>
</dbReference>
<dbReference type="FunFam" id="1.10.110.10:FF:000002">
    <property type="entry name" value="Non-specific lipid-transfer protein"/>
    <property type="match status" value="1"/>
</dbReference>
<dbReference type="Gene3D" id="1.10.110.10">
    <property type="entry name" value="Plant lipid-transfer and hydrophobic proteins"/>
    <property type="match status" value="1"/>
</dbReference>
<dbReference type="InterPro" id="IPR036312">
    <property type="entry name" value="Bifun_inhib/LTP/seed_sf"/>
</dbReference>
<dbReference type="InterPro" id="IPR016140">
    <property type="entry name" value="Bifunc_inhib/LTP/seed_store"/>
</dbReference>
<dbReference type="InterPro" id="IPR000528">
    <property type="entry name" value="Plant_nsLTP"/>
</dbReference>
<dbReference type="PANTHER" id="PTHR33076">
    <property type="entry name" value="NON-SPECIFIC LIPID-TRANSFER PROTEIN 2-RELATED"/>
    <property type="match status" value="1"/>
</dbReference>
<dbReference type="Pfam" id="PF00234">
    <property type="entry name" value="Tryp_alpha_amyl"/>
    <property type="match status" value="1"/>
</dbReference>
<dbReference type="PRINTS" id="PR00382">
    <property type="entry name" value="LIPIDTRNSFER"/>
</dbReference>
<dbReference type="SMART" id="SM00499">
    <property type="entry name" value="AAI"/>
    <property type="match status" value="1"/>
</dbReference>
<dbReference type="SUPFAM" id="SSF47699">
    <property type="entry name" value="Bifunctional inhibitor/lipid-transfer protein/seed storage 2S albumin"/>
    <property type="match status" value="1"/>
</dbReference>
<dbReference type="PROSITE" id="PS00597">
    <property type="entry name" value="PLANT_LTP"/>
    <property type="match status" value="1"/>
</dbReference>
<keyword id="KW-1015">Disulfide bond</keyword>
<keyword id="KW-0446">Lipid-binding</keyword>
<keyword id="KW-1185">Reference proteome</keyword>
<keyword id="KW-0732">Signal</keyword>
<keyword id="KW-0813">Transport</keyword>
<feature type="signal peptide" evidence="2">
    <location>
        <begin position="1"/>
        <end position="26"/>
    </location>
</feature>
<feature type="chain" id="PRO_0000018378" description="Non-specific lipid-transfer protein">
    <location>
        <begin position="27"/>
        <end position="120"/>
    </location>
</feature>
<feature type="disulfide bond" evidence="1">
    <location>
        <begin position="40"/>
        <end position="56"/>
    </location>
</feature>
<feature type="disulfide bond" evidence="1">
    <location>
        <begin position="57"/>
        <end position="102"/>
    </location>
</feature>
<feature type="disulfide bond" evidence="1">
    <location>
        <begin position="77"/>
        <end position="116"/>
    </location>
</feature>
<accession>Q43129</accession>
<protein>
    <recommendedName>
        <fullName>Non-specific lipid-transfer protein</fullName>
        <shortName>LTP</shortName>
    </recommendedName>
    <alternativeName>
        <fullName>GH3</fullName>
    </alternativeName>
</protein>
<organism>
    <name type="scientific">Gossypium hirsutum</name>
    <name type="common">Upland cotton</name>
    <name type="synonym">Gossypium mexicanum</name>
    <dbReference type="NCBI Taxonomy" id="3635"/>
    <lineage>
        <taxon>Eukaryota</taxon>
        <taxon>Viridiplantae</taxon>
        <taxon>Streptophyta</taxon>
        <taxon>Embryophyta</taxon>
        <taxon>Tracheophyta</taxon>
        <taxon>Spermatophyta</taxon>
        <taxon>Magnoliopsida</taxon>
        <taxon>eudicotyledons</taxon>
        <taxon>Gunneridae</taxon>
        <taxon>Pentapetalae</taxon>
        <taxon>rosids</taxon>
        <taxon>malvids</taxon>
        <taxon>Malvales</taxon>
        <taxon>Malvaceae</taxon>
        <taxon>Malvoideae</taxon>
        <taxon>Gossypium</taxon>
    </lineage>
</organism>
<comment type="function">
    <text>Plant non-specific lipid-transfer proteins transfer phospholipids as well as galactolipids across membranes. May play a role in wax or cutin deposition in the cell walls of expanding epidermal cells and certain secretory tissues.</text>
</comment>
<comment type="similarity">
    <text evidence="3">Belongs to the plant LTP family.</text>
</comment>
<name>NLTP2_GOSHI</name>
<sequence length="120" mass="11817">MASSMSLKLACVVVLCMVVGAPLAQGAVTSGQVTNSLAPCINYLRGSGAGAVPPGCCTGIKSLNSAAQTTPVRQAACRCIKSAAAGITGINFGLASGLPGKCGVNIPYKISPSTDCNSVK</sequence>